<protein>
    <recommendedName>
        <fullName evidence="1">UDP-3-O-acyl-N-acetylglucosamine deacetylase</fullName>
        <shortName evidence="1">UDP-3-O-acyl-GlcNAc deacetylase</shortName>
        <ecNumber evidence="1">3.5.1.108</ecNumber>
    </recommendedName>
    <alternativeName>
        <fullName evidence="1">UDP-3-O-[R-3-hydroxymyristoyl]-N-acetylglucosamine deacetylase</fullName>
    </alternativeName>
</protein>
<evidence type="ECO:0000255" key="1">
    <source>
        <dbReference type="HAMAP-Rule" id="MF_00388"/>
    </source>
</evidence>
<organism>
    <name type="scientific">Enterobacter sp. (strain 638)</name>
    <dbReference type="NCBI Taxonomy" id="399742"/>
    <lineage>
        <taxon>Bacteria</taxon>
        <taxon>Pseudomonadati</taxon>
        <taxon>Pseudomonadota</taxon>
        <taxon>Gammaproteobacteria</taxon>
        <taxon>Enterobacterales</taxon>
        <taxon>Enterobacteriaceae</taxon>
        <taxon>Enterobacter</taxon>
    </lineage>
</organism>
<feature type="chain" id="PRO_1000060739" description="UDP-3-O-acyl-N-acetylglucosamine deacetylase">
    <location>
        <begin position="1"/>
        <end position="305"/>
    </location>
</feature>
<feature type="active site" description="Proton donor" evidence="1">
    <location>
        <position position="265"/>
    </location>
</feature>
<feature type="binding site" evidence="1">
    <location>
        <position position="79"/>
    </location>
    <ligand>
        <name>Zn(2+)</name>
        <dbReference type="ChEBI" id="CHEBI:29105"/>
    </ligand>
</feature>
<feature type="binding site" evidence="1">
    <location>
        <position position="238"/>
    </location>
    <ligand>
        <name>Zn(2+)</name>
        <dbReference type="ChEBI" id="CHEBI:29105"/>
    </ligand>
</feature>
<feature type="binding site" evidence="1">
    <location>
        <position position="242"/>
    </location>
    <ligand>
        <name>Zn(2+)</name>
        <dbReference type="ChEBI" id="CHEBI:29105"/>
    </ligand>
</feature>
<dbReference type="EC" id="3.5.1.108" evidence="1"/>
<dbReference type="EMBL" id="CP000653">
    <property type="protein sequence ID" value="ABP59329.1"/>
    <property type="molecule type" value="Genomic_DNA"/>
</dbReference>
<dbReference type="RefSeq" id="WP_012016050.1">
    <property type="nucleotide sequence ID" value="NC_009436.1"/>
</dbReference>
<dbReference type="SMR" id="A4W6J9"/>
<dbReference type="STRING" id="399742.Ent638_0642"/>
<dbReference type="KEGG" id="ent:Ent638_0642"/>
<dbReference type="eggNOG" id="COG0774">
    <property type="taxonomic scope" value="Bacteria"/>
</dbReference>
<dbReference type="HOGENOM" id="CLU_046528_1_0_6"/>
<dbReference type="OrthoDB" id="9802746at2"/>
<dbReference type="UniPathway" id="UPA00359">
    <property type="reaction ID" value="UER00478"/>
</dbReference>
<dbReference type="Proteomes" id="UP000000230">
    <property type="component" value="Chromosome"/>
</dbReference>
<dbReference type="GO" id="GO:0016020">
    <property type="term" value="C:membrane"/>
    <property type="evidence" value="ECO:0007669"/>
    <property type="project" value="GOC"/>
</dbReference>
<dbReference type="GO" id="GO:0046872">
    <property type="term" value="F:metal ion binding"/>
    <property type="evidence" value="ECO:0007669"/>
    <property type="project" value="UniProtKB-KW"/>
</dbReference>
<dbReference type="GO" id="GO:0103117">
    <property type="term" value="F:UDP-3-O-acyl-N-acetylglucosamine deacetylase activity"/>
    <property type="evidence" value="ECO:0007669"/>
    <property type="project" value="UniProtKB-UniRule"/>
</dbReference>
<dbReference type="GO" id="GO:0009245">
    <property type="term" value="P:lipid A biosynthetic process"/>
    <property type="evidence" value="ECO:0007669"/>
    <property type="project" value="UniProtKB-UniRule"/>
</dbReference>
<dbReference type="FunFam" id="3.30.1700.10:FF:000001">
    <property type="entry name" value="UDP-3-O-acyl-N-acetylglucosamine deacetylase"/>
    <property type="match status" value="1"/>
</dbReference>
<dbReference type="FunFam" id="3.30.230.20:FF:000001">
    <property type="entry name" value="UDP-3-O-acyl-N-acetylglucosamine deacetylase"/>
    <property type="match status" value="1"/>
</dbReference>
<dbReference type="Gene3D" id="3.30.230.20">
    <property type="entry name" value="lpxc deacetylase, domain 1"/>
    <property type="match status" value="1"/>
</dbReference>
<dbReference type="Gene3D" id="3.30.1700.10">
    <property type="entry name" value="lpxc deacetylase, domain 2"/>
    <property type="match status" value="1"/>
</dbReference>
<dbReference type="HAMAP" id="MF_00388">
    <property type="entry name" value="LpxC"/>
    <property type="match status" value="1"/>
</dbReference>
<dbReference type="InterPro" id="IPR020568">
    <property type="entry name" value="Ribosomal_Su5_D2-typ_SF"/>
</dbReference>
<dbReference type="InterPro" id="IPR004463">
    <property type="entry name" value="UDP-acyl_GlcNac_deAcase"/>
</dbReference>
<dbReference type="InterPro" id="IPR011334">
    <property type="entry name" value="UDP-acyl_GlcNac_deAcase_C"/>
</dbReference>
<dbReference type="InterPro" id="IPR015870">
    <property type="entry name" value="UDP-acyl_N-AcGlcN_deAcase_N"/>
</dbReference>
<dbReference type="NCBIfam" id="TIGR00325">
    <property type="entry name" value="lpxC"/>
    <property type="match status" value="1"/>
</dbReference>
<dbReference type="PANTHER" id="PTHR33694">
    <property type="entry name" value="UDP-3-O-ACYL-N-ACETYLGLUCOSAMINE DEACETYLASE 1, MITOCHONDRIAL-RELATED"/>
    <property type="match status" value="1"/>
</dbReference>
<dbReference type="PANTHER" id="PTHR33694:SF1">
    <property type="entry name" value="UDP-3-O-ACYL-N-ACETYLGLUCOSAMINE DEACETYLASE 1, MITOCHONDRIAL-RELATED"/>
    <property type="match status" value="1"/>
</dbReference>
<dbReference type="Pfam" id="PF03331">
    <property type="entry name" value="LpxC"/>
    <property type="match status" value="1"/>
</dbReference>
<dbReference type="SUPFAM" id="SSF54211">
    <property type="entry name" value="Ribosomal protein S5 domain 2-like"/>
    <property type="match status" value="2"/>
</dbReference>
<sequence>MIKQRTLKRIVQATGVGLHTGKKVTLTLRPASANTGVIYRRTDLNPPVDFPADAKSVRDTMLCTCLVNEHDVRISTVEHLNAALAGLGIDNIVIEVDAPEIPIMDGSAAPFVYLLLDAGIEELNCAKKFVRIKETVRVEDGDKWAEFKPFNGFSLDFTIDFNHPAIDASTQRYAMNFSADAFMRQISRARTFGFMRDIEYLQSRGLCLGGSFDCAIVVDDYRVLNEDGLRFEDEFVRHKMLDAIGDLFMCGHNIIGAFTAFKSGHALNNKLLQAVLAKQEAWEYVTFEDEAELPLAFKAPSTVLA</sequence>
<reference key="1">
    <citation type="journal article" date="2010" name="PLoS Genet.">
        <title>Genome sequence of the plant growth promoting endophytic bacterium Enterobacter sp. 638.</title>
        <authorList>
            <person name="Taghavi S."/>
            <person name="van der Lelie D."/>
            <person name="Hoffman A."/>
            <person name="Zhang Y.B."/>
            <person name="Walla M.D."/>
            <person name="Vangronsveld J."/>
            <person name="Newman L."/>
            <person name="Monchy S."/>
        </authorList>
    </citation>
    <scope>NUCLEOTIDE SEQUENCE [LARGE SCALE GENOMIC DNA]</scope>
    <source>
        <strain>638</strain>
    </source>
</reference>
<name>LPXC_ENT38</name>
<keyword id="KW-0378">Hydrolase</keyword>
<keyword id="KW-0441">Lipid A biosynthesis</keyword>
<keyword id="KW-0444">Lipid biosynthesis</keyword>
<keyword id="KW-0443">Lipid metabolism</keyword>
<keyword id="KW-0479">Metal-binding</keyword>
<keyword id="KW-0862">Zinc</keyword>
<gene>
    <name evidence="1" type="primary">lpxC</name>
    <name type="ordered locus">Ent638_0642</name>
</gene>
<accession>A4W6J9</accession>
<comment type="function">
    <text evidence="1">Catalyzes the hydrolysis of UDP-3-O-myristoyl-N-acetylglucosamine to form UDP-3-O-myristoylglucosamine and acetate, the committed step in lipid A biosynthesis.</text>
</comment>
<comment type="catalytic activity">
    <reaction evidence="1">
        <text>a UDP-3-O-[(3R)-3-hydroxyacyl]-N-acetyl-alpha-D-glucosamine + H2O = a UDP-3-O-[(3R)-3-hydroxyacyl]-alpha-D-glucosamine + acetate</text>
        <dbReference type="Rhea" id="RHEA:67816"/>
        <dbReference type="ChEBI" id="CHEBI:15377"/>
        <dbReference type="ChEBI" id="CHEBI:30089"/>
        <dbReference type="ChEBI" id="CHEBI:137740"/>
        <dbReference type="ChEBI" id="CHEBI:173225"/>
        <dbReference type="EC" id="3.5.1.108"/>
    </reaction>
</comment>
<comment type="cofactor">
    <cofactor evidence="1">
        <name>Zn(2+)</name>
        <dbReference type="ChEBI" id="CHEBI:29105"/>
    </cofactor>
</comment>
<comment type="pathway">
    <text evidence="1">Glycolipid biosynthesis; lipid IV(A) biosynthesis; lipid IV(A) from (3R)-3-hydroxytetradecanoyl-[acyl-carrier-protein] and UDP-N-acetyl-alpha-D-glucosamine: step 2/6.</text>
</comment>
<comment type="similarity">
    <text evidence="1">Belongs to the LpxC family.</text>
</comment>
<proteinExistence type="inferred from homology"/>